<accession>Q5MZI0</accession>
<comment type="function">
    <text evidence="1">Cell wall formation.</text>
</comment>
<comment type="catalytic activity">
    <reaction evidence="1">
        <text>UDP-N-acetyl-alpha-D-muramate + L-alanine + ATP = UDP-N-acetyl-alpha-D-muramoyl-L-alanine + ADP + phosphate + H(+)</text>
        <dbReference type="Rhea" id="RHEA:23372"/>
        <dbReference type="ChEBI" id="CHEBI:15378"/>
        <dbReference type="ChEBI" id="CHEBI:30616"/>
        <dbReference type="ChEBI" id="CHEBI:43474"/>
        <dbReference type="ChEBI" id="CHEBI:57972"/>
        <dbReference type="ChEBI" id="CHEBI:70757"/>
        <dbReference type="ChEBI" id="CHEBI:83898"/>
        <dbReference type="ChEBI" id="CHEBI:456216"/>
        <dbReference type="EC" id="6.3.2.8"/>
    </reaction>
</comment>
<comment type="pathway">
    <text evidence="1">Cell wall biogenesis; peptidoglycan biosynthesis.</text>
</comment>
<comment type="subcellular location">
    <subcellularLocation>
        <location evidence="1">Cytoplasm</location>
    </subcellularLocation>
</comment>
<comment type="similarity">
    <text evidence="1">Belongs to the MurCDEF family.</text>
</comment>
<sequence length="478" mass="51605">MTIAVDLQGRPFHFIGIGGIGMSALAQVVTERQLPVSGSDIRRSHITDRLAQLGAQIFDRQAATNLEFFQEAVSAGQSPQVICSTAIHAHNEEYQAAIDLGCPVFHRSDLLAALLRVYESIAVAGTHGKTTTSGLIAYLLYQAGLDPTVVIGGEVNALGGNARLGQGRHLVAEADESDGSLVKLQAAIGIITNIELDHPDHYCDLEAVISTFKTFSDNCSQLIANWDCPTVRDRLPGTISYSLDPARGADYTVDQVSFRGSGTQARIWERGELLGRIHLPLLEAHNLSNALAAIAACRHLGMDFASIREGLAGFEGARRRFEFRGSAQGIQFVDDYAHHPSELAATLAAARLQIDSGCSRLPEVPKRLVAIFQPHRYSRTQAFLAEFAQSFGPADLVLISDIYAAGERNPGQLSGQTLADAIAQYQANVHYAPDLEAVEQRLHQLLQPGDLALFLGAGNLNQVIPRLLDHYACDRSAA</sequence>
<evidence type="ECO:0000255" key="1">
    <source>
        <dbReference type="HAMAP-Rule" id="MF_00046"/>
    </source>
</evidence>
<feature type="chain" id="PRO_0000242605" description="UDP-N-acetylmuramate--L-alanine ligase">
    <location>
        <begin position="1"/>
        <end position="478"/>
    </location>
</feature>
<feature type="binding site" evidence="1">
    <location>
        <begin position="125"/>
        <end position="131"/>
    </location>
    <ligand>
        <name>ATP</name>
        <dbReference type="ChEBI" id="CHEBI:30616"/>
    </ligand>
</feature>
<organism>
    <name type="scientific">Synechococcus sp. (strain ATCC 27144 / PCC 6301 / SAUG 1402/1)</name>
    <name type="common">Anacystis nidulans</name>
    <dbReference type="NCBI Taxonomy" id="269084"/>
    <lineage>
        <taxon>Bacteria</taxon>
        <taxon>Bacillati</taxon>
        <taxon>Cyanobacteriota</taxon>
        <taxon>Cyanophyceae</taxon>
        <taxon>Synechococcales</taxon>
        <taxon>Synechococcaceae</taxon>
        <taxon>Synechococcus</taxon>
    </lineage>
</organism>
<dbReference type="EC" id="6.3.2.8" evidence="1"/>
<dbReference type="EMBL" id="AP008231">
    <property type="protein sequence ID" value="BAD80540.1"/>
    <property type="molecule type" value="Genomic_DNA"/>
</dbReference>
<dbReference type="RefSeq" id="WP_011244660.1">
    <property type="nucleotide sequence ID" value="NZ_CP085785.1"/>
</dbReference>
<dbReference type="SMR" id="Q5MZI0"/>
<dbReference type="GeneID" id="72430612"/>
<dbReference type="KEGG" id="syc:syc2350_d"/>
<dbReference type="eggNOG" id="COG0773">
    <property type="taxonomic scope" value="Bacteria"/>
</dbReference>
<dbReference type="UniPathway" id="UPA00219"/>
<dbReference type="Proteomes" id="UP000001175">
    <property type="component" value="Chromosome"/>
</dbReference>
<dbReference type="GO" id="GO:0005737">
    <property type="term" value="C:cytoplasm"/>
    <property type="evidence" value="ECO:0007669"/>
    <property type="project" value="UniProtKB-SubCell"/>
</dbReference>
<dbReference type="GO" id="GO:0005524">
    <property type="term" value="F:ATP binding"/>
    <property type="evidence" value="ECO:0007669"/>
    <property type="project" value="UniProtKB-UniRule"/>
</dbReference>
<dbReference type="GO" id="GO:0008763">
    <property type="term" value="F:UDP-N-acetylmuramate-L-alanine ligase activity"/>
    <property type="evidence" value="ECO:0007669"/>
    <property type="project" value="UniProtKB-UniRule"/>
</dbReference>
<dbReference type="GO" id="GO:0051301">
    <property type="term" value="P:cell division"/>
    <property type="evidence" value="ECO:0007669"/>
    <property type="project" value="UniProtKB-KW"/>
</dbReference>
<dbReference type="GO" id="GO:0071555">
    <property type="term" value="P:cell wall organization"/>
    <property type="evidence" value="ECO:0007669"/>
    <property type="project" value="UniProtKB-KW"/>
</dbReference>
<dbReference type="GO" id="GO:0009252">
    <property type="term" value="P:peptidoglycan biosynthetic process"/>
    <property type="evidence" value="ECO:0007669"/>
    <property type="project" value="UniProtKB-UniRule"/>
</dbReference>
<dbReference type="GO" id="GO:0008360">
    <property type="term" value="P:regulation of cell shape"/>
    <property type="evidence" value="ECO:0007669"/>
    <property type="project" value="UniProtKB-KW"/>
</dbReference>
<dbReference type="Gene3D" id="3.90.190.20">
    <property type="entry name" value="Mur ligase, C-terminal domain"/>
    <property type="match status" value="1"/>
</dbReference>
<dbReference type="Gene3D" id="3.40.1190.10">
    <property type="entry name" value="Mur-like, catalytic domain"/>
    <property type="match status" value="1"/>
</dbReference>
<dbReference type="Gene3D" id="3.40.50.720">
    <property type="entry name" value="NAD(P)-binding Rossmann-like Domain"/>
    <property type="match status" value="1"/>
</dbReference>
<dbReference type="HAMAP" id="MF_00046">
    <property type="entry name" value="MurC"/>
    <property type="match status" value="1"/>
</dbReference>
<dbReference type="InterPro" id="IPR036565">
    <property type="entry name" value="Mur-like_cat_sf"/>
</dbReference>
<dbReference type="InterPro" id="IPR004101">
    <property type="entry name" value="Mur_ligase_C"/>
</dbReference>
<dbReference type="InterPro" id="IPR036615">
    <property type="entry name" value="Mur_ligase_C_dom_sf"/>
</dbReference>
<dbReference type="InterPro" id="IPR013221">
    <property type="entry name" value="Mur_ligase_cen"/>
</dbReference>
<dbReference type="InterPro" id="IPR000713">
    <property type="entry name" value="Mur_ligase_N"/>
</dbReference>
<dbReference type="InterPro" id="IPR050061">
    <property type="entry name" value="MurCDEF_pg_biosynth"/>
</dbReference>
<dbReference type="InterPro" id="IPR005758">
    <property type="entry name" value="UDP-N-AcMur_Ala_ligase_MurC"/>
</dbReference>
<dbReference type="NCBIfam" id="TIGR01082">
    <property type="entry name" value="murC"/>
    <property type="match status" value="1"/>
</dbReference>
<dbReference type="PANTHER" id="PTHR43445:SF3">
    <property type="entry name" value="UDP-N-ACETYLMURAMATE--L-ALANINE LIGASE"/>
    <property type="match status" value="1"/>
</dbReference>
<dbReference type="PANTHER" id="PTHR43445">
    <property type="entry name" value="UDP-N-ACETYLMURAMATE--L-ALANINE LIGASE-RELATED"/>
    <property type="match status" value="1"/>
</dbReference>
<dbReference type="Pfam" id="PF01225">
    <property type="entry name" value="Mur_ligase"/>
    <property type="match status" value="1"/>
</dbReference>
<dbReference type="Pfam" id="PF02875">
    <property type="entry name" value="Mur_ligase_C"/>
    <property type="match status" value="1"/>
</dbReference>
<dbReference type="Pfam" id="PF08245">
    <property type="entry name" value="Mur_ligase_M"/>
    <property type="match status" value="1"/>
</dbReference>
<dbReference type="SUPFAM" id="SSF51984">
    <property type="entry name" value="MurCD N-terminal domain"/>
    <property type="match status" value="1"/>
</dbReference>
<dbReference type="SUPFAM" id="SSF53623">
    <property type="entry name" value="MurD-like peptide ligases, catalytic domain"/>
    <property type="match status" value="1"/>
</dbReference>
<dbReference type="SUPFAM" id="SSF53244">
    <property type="entry name" value="MurD-like peptide ligases, peptide-binding domain"/>
    <property type="match status" value="1"/>
</dbReference>
<gene>
    <name evidence="1" type="primary">murC</name>
    <name type="ordered locus">syc2350_d</name>
</gene>
<proteinExistence type="inferred from homology"/>
<reference key="1">
    <citation type="journal article" date="2007" name="Photosyn. Res.">
        <title>Complete nucleotide sequence of the freshwater unicellular cyanobacterium Synechococcus elongatus PCC 6301 chromosome: gene content and organization.</title>
        <authorList>
            <person name="Sugita C."/>
            <person name="Ogata K."/>
            <person name="Shikata M."/>
            <person name="Jikuya H."/>
            <person name="Takano J."/>
            <person name="Furumichi M."/>
            <person name="Kanehisa M."/>
            <person name="Omata T."/>
            <person name="Sugiura M."/>
            <person name="Sugita M."/>
        </authorList>
    </citation>
    <scope>NUCLEOTIDE SEQUENCE [LARGE SCALE GENOMIC DNA]</scope>
    <source>
        <strain>ATCC 27144 / PCC 6301 / SAUG 1402/1</strain>
    </source>
</reference>
<keyword id="KW-0067">ATP-binding</keyword>
<keyword id="KW-0131">Cell cycle</keyword>
<keyword id="KW-0132">Cell division</keyword>
<keyword id="KW-0133">Cell shape</keyword>
<keyword id="KW-0961">Cell wall biogenesis/degradation</keyword>
<keyword id="KW-0963">Cytoplasm</keyword>
<keyword id="KW-0436">Ligase</keyword>
<keyword id="KW-0547">Nucleotide-binding</keyword>
<keyword id="KW-0573">Peptidoglycan synthesis</keyword>
<protein>
    <recommendedName>
        <fullName evidence="1">UDP-N-acetylmuramate--L-alanine ligase</fullName>
        <ecNumber evidence="1">6.3.2.8</ecNumber>
    </recommendedName>
    <alternativeName>
        <fullName evidence="1">UDP-N-acetylmuramoyl-L-alanine synthetase</fullName>
    </alternativeName>
</protein>
<name>MURC_SYNP6</name>